<name>1A1D_BURMS</name>
<comment type="function">
    <text evidence="1">Catalyzes a cyclopropane ring-opening reaction, the irreversible conversion of 1-aminocyclopropane-1-carboxylate (ACC) to ammonia and alpha-ketobutyrate. Allows growth on ACC as a nitrogen source.</text>
</comment>
<comment type="catalytic activity">
    <reaction evidence="1">
        <text>1-aminocyclopropane-1-carboxylate + H2O = 2-oxobutanoate + NH4(+)</text>
        <dbReference type="Rhea" id="RHEA:16933"/>
        <dbReference type="ChEBI" id="CHEBI:15377"/>
        <dbReference type="ChEBI" id="CHEBI:16763"/>
        <dbReference type="ChEBI" id="CHEBI:28938"/>
        <dbReference type="ChEBI" id="CHEBI:58360"/>
        <dbReference type="EC" id="3.5.99.7"/>
    </reaction>
</comment>
<comment type="cofactor">
    <cofactor evidence="1">
        <name>pyridoxal 5'-phosphate</name>
        <dbReference type="ChEBI" id="CHEBI:597326"/>
    </cofactor>
</comment>
<comment type="subunit">
    <text evidence="1">Homotrimer.</text>
</comment>
<comment type="similarity">
    <text evidence="1">Belongs to the ACC deaminase/D-cysteine desulfhydrase family.</text>
</comment>
<proteinExistence type="inferred from homology"/>
<feature type="chain" id="PRO_1000047089" description="1-aminocyclopropane-1-carboxylate deaminase">
    <location>
        <begin position="1"/>
        <end position="338"/>
    </location>
</feature>
<feature type="active site" description="Nucleophile" evidence="1">
    <location>
        <position position="78"/>
    </location>
</feature>
<feature type="modified residue" description="N6-(pyridoxal phosphate)lysine" evidence="1">
    <location>
        <position position="51"/>
    </location>
</feature>
<gene>
    <name evidence="1" type="primary">acdS</name>
    <name type="ordered locus">BMASAVP1_0426</name>
</gene>
<organism>
    <name type="scientific">Burkholderia mallei (strain SAVP1)</name>
    <dbReference type="NCBI Taxonomy" id="320388"/>
    <lineage>
        <taxon>Bacteria</taxon>
        <taxon>Pseudomonadati</taxon>
        <taxon>Pseudomonadota</taxon>
        <taxon>Betaproteobacteria</taxon>
        <taxon>Burkholderiales</taxon>
        <taxon>Burkholderiaceae</taxon>
        <taxon>Burkholderia</taxon>
        <taxon>pseudomallei group</taxon>
    </lineage>
</organism>
<accession>A1UVN3</accession>
<sequence>MNLQKFSRYPLTFGPTPIQPLKRLSAHLGGKVELYAKRDDCNSGLAFGGNKTRKLEYLIPDALAQGCDTLVSIGGIQSNQTRQVAAVAAHLGMKCVLVQENWVNYHDAVYDRVGNIQMSRMMGADVRLVPDGFDIGFRKSWEDALADVRARGGKPYAIPAGCSDHPLGGLGFVGFAEEVRAQEAELGFQFDYVVVCSVTGSTQAGMVVGFAADGRADRVIGVDASAKPAQTREQILRIAKHTADRVELGRDITSADVVLDERFGGPEYGLPNEGTLEAIRLCAKLEGVLTDPVYEGKSMHGMIEKVRLGEFPAGSKVLYAHLGGVPALNAYSFLFRDG</sequence>
<protein>
    <recommendedName>
        <fullName evidence="1">1-aminocyclopropane-1-carboxylate deaminase</fullName>
        <shortName evidence="1">ACC deaminase</shortName>
        <shortName evidence="1">ACCD</shortName>
        <ecNumber evidence="1">3.5.99.7</ecNumber>
    </recommendedName>
</protein>
<keyword id="KW-0378">Hydrolase</keyword>
<keyword id="KW-0663">Pyridoxal phosphate</keyword>
<evidence type="ECO:0000255" key="1">
    <source>
        <dbReference type="HAMAP-Rule" id="MF_00807"/>
    </source>
</evidence>
<dbReference type="EC" id="3.5.99.7" evidence="1"/>
<dbReference type="EMBL" id="CP000525">
    <property type="protein sequence ID" value="ABM48578.1"/>
    <property type="molecule type" value="Genomic_DNA"/>
</dbReference>
<dbReference type="RefSeq" id="WP_004184549.1">
    <property type="nucleotide sequence ID" value="NC_008784.1"/>
</dbReference>
<dbReference type="SMR" id="A1UVN3"/>
<dbReference type="KEGG" id="bmv:BMASAVP1_0426"/>
<dbReference type="HOGENOM" id="CLU_048897_2_1_4"/>
<dbReference type="GO" id="GO:0008660">
    <property type="term" value="F:1-aminocyclopropane-1-carboxylate deaminase activity"/>
    <property type="evidence" value="ECO:0007669"/>
    <property type="project" value="UniProtKB-UniRule"/>
</dbReference>
<dbReference type="GO" id="GO:0019148">
    <property type="term" value="F:D-cysteine desulfhydrase activity"/>
    <property type="evidence" value="ECO:0007669"/>
    <property type="project" value="TreeGrafter"/>
</dbReference>
<dbReference type="GO" id="GO:0030170">
    <property type="term" value="F:pyridoxal phosphate binding"/>
    <property type="evidence" value="ECO:0007669"/>
    <property type="project" value="InterPro"/>
</dbReference>
<dbReference type="GO" id="GO:0018871">
    <property type="term" value="P:1-aminocyclopropane-1-carboxylate metabolic process"/>
    <property type="evidence" value="ECO:0007669"/>
    <property type="project" value="UniProtKB-UniRule"/>
</dbReference>
<dbReference type="GO" id="GO:0009310">
    <property type="term" value="P:amine catabolic process"/>
    <property type="evidence" value="ECO:0007669"/>
    <property type="project" value="InterPro"/>
</dbReference>
<dbReference type="CDD" id="cd06449">
    <property type="entry name" value="ACCD"/>
    <property type="match status" value="1"/>
</dbReference>
<dbReference type="FunFam" id="3.40.50.1100:FF:000053">
    <property type="entry name" value="1-aminocyclopropane-1-carboxylate deaminase"/>
    <property type="match status" value="1"/>
</dbReference>
<dbReference type="Gene3D" id="3.40.50.1100">
    <property type="match status" value="2"/>
</dbReference>
<dbReference type="HAMAP" id="MF_00807">
    <property type="entry name" value="ACC_deaminase"/>
    <property type="match status" value="1"/>
</dbReference>
<dbReference type="InterPro" id="IPR027278">
    <property type="entry name" value="ACCD_DCysDesulf"/>
</dbReference>
<dbReference type="InterPro" id="IPR005965">
    <property type="entry name" value="ACP_carboxylate_deaminase"/>
</dbReference>
<dbReference type="InterPro" id="IPR020601">
    <property type="entry name" value="ACP_carboxylate_deaminase_bac"/>
</dbReference>
<dbReference type="InterPro" id="IPR001926">
    <property type="entry name" value="TrpB-like_PALP"/>
</dbReference>
<dbReference type="InterPro" id="IPR036052">
    <property type="entry name" value="TrpB-like_PALP_sf"/>
</dbReference>
<dbReference type="NCBIfam" id="TIGR01274">
    <property type="entry name" value="ACC_deam"/>
    <property type="match status" value="1"/>
</dbReference>
<dbReference type="PANTHER" id="PTHR43780">
    <property type="entry name" value="1-AMINOCYCLOPROPANE-1-CARBOXYLATE DEAMINASE-RELATED"/>
    <property type="match status" value="1"/>
</dbReference>
<dbReference type="PANTHER" id="PTHR43780:SF2">
    <property type="entry name" value="1-AMINOCYCLOPROPANE-1-CARBOXYLATE DEAMINASE-RELATED"/>
    <property type="match status" value="1"/>
</dbReference>
<dbReference type="Pfam" id="PF00291">
    <property type="entry name" value="PALP"/>
    <property type="match status" value="1"/>
</dbReference>
<dbReference type="PIRSF" id="PIRSF006278">
    <property type="entry name" value="ACCD_DCysDesulf"/>
    <property type="match status" value="1"/>
</dbReference>
<dbReference type="SUPFAM" id="SSF53686">
    <property type="entry name" value="Tryptophan synthase beta subunit-like PLP-dependent enzymes"/>
    <property type="match status" value="1"/>
</dbReference>
<reference key="1">
    <citation type="journal article" date="2010" name="Genome Biol. Evol.">
        <title>Continuing evolution of Burkholderia mallei through genome reduction and large-scale rearrangements.</title>
        <authorList>
            <person name="Losada L."/>
            <person name="Ronning C.M."/>
            <person name="DeShazer D."/>
            <person name="Woods D."/>
            <person name="Fedorova N."/>
            <person name="Kim H.S."/>
            <person name="Shabalina S.A."/>
            <person name="Pearson T.R."/>
            <person name="Brinkac L."/>
            <person name="Tan P."/>
            <person name="Nandi T."/>
            <person name="Crabtree J."/>
            <person name="Badger J."/>
            <person name="Beckstrom-Sternberg S."/>
            <person name="Saqib M."/>
            <person name="Schutzer S.E."/>
            <person name="Keim P."/>
            <person name="Nierman W.C."/>
        </authorList>
    </citation>
    <scope>NUCLEOTIDE SEQUENCE [LARGE SCALE GENOMIC DNA]</scope>
    <source>
        <strain>SAVP1</strain>
    </source>
</reference>